<evidence type="ECO:0000255" key="1">
    <source>
        <dbReference type="HAMAP-Rule" id="MF_01662"/>
    </source>
</evidence>
<reference key="1">
    <citation type="journal article" date="2009" name="J. Bacteriol.">
        <title>Complete genome sequence of Haemophilus parasuis SH0165.</title>
        <authorList>
            <person name="Yue M."/>
            <person name="Yang F."/>
            <person name="Yang J."/>
            <person name="Bei W."/>
            <person name="Cai X."/>
            <person name="Chen L."/>
            <person name="Dong J."/>
            <person name="Zhou R."/>
            <person name="Jin M."/>
            <person name="Jin Q."/>
            <person name="Chen H."/>
        </authorList>
    </citation>
    <scope>NUCLEOTIDE SEQUENCE [LARGE SCALE GENOMIC DNA]</scope>
    <source>
        <strain>SH0165</strain>
    </source>
</reference>
<comment type="function">
    <text evidence="1">Involved in the anomeric conversion of L-fucose.</text>
</comment>
<comment type="catalytic activity">
    <reaction evidence="1">
        <text>alpha-L-fucose = beta-L-fucose</text>
        <dbReference type="Rhea" id="RHEA:25580"/>
        <dbReference type="ChEBI" id="CHEBI:42548"/>
        <dbReference type="ChEBI" id="CHEBI:42589"/>
        <dbReference type="EC" id="5.1.3.29"/>
    </reaction>
</comment>
<comment type="pathway">
    <text evidence="1">Carbohydrate metabolism; L-fucose metabolism.</text>
</comment>
<comment type="subunit">
    <text evidence="1">Homodecamer.</text>
</comment>
<comment type="subcellular location">
    <subcellularLocation>
        <location evidence="1">Cytoplasm</location>
    </subcellularLocation>
</comment>
<comment type="similarity">
    <text evidence="1">Belongs to the RbsD / FucU family. FucU mutarotase subfamily.</text>
</comment>
<name>FUCM_GLAP5</name>
<sequence>MLKGIHPALSPELLKVLAEMGHGDEIVLSDAHFPAHQLHHKVIRADGIQIATLLEAITPLFEYDQYVERPLAMMQAVHGDSLDLAVEERYLAAIAKINGKAPLVERVERFAFYDRAKIAYAVVITGELAKYGNIILKKGVTPVLTD</sequence>
<dbReference type="EC" id="5.1.3.29" evidence="1"/>
<dbReference type="EMBL" id="CP001321">
    <property type="protein sequence ID" value="ACL33084.1"/>
    <property type="molecule type" value="Genomic_DNA"/>
</dbReference>
<dbReference type="RefSeq" id="WP_005710924.1">
    <property type="nucleotide sequence ID" value="NC_011852.1"/>
</dbReference>
<dbReference type="SMR" id="B8F6Y2"/>
<dbReference type="STRING" id="557723.HAPS_1528"/>
<dbReference type="KEGG" id="hap:HAPS_1528"/>
<dbReference type="HOGENOM" id="CLU_120075_1_0_6"/>
<dbReference type="UniPathway" id="UPA00956"/>
<dbReference type="Proteomes" id="UP000006743">
    <property type="component" value="Chromosome"/>
</dbReference>
<dbReference type="GO" id="GO:0005737">
    <property type="term" value="C:cytoplasm"/>
    <property type="evidence" value="ECO:0007669"/>
    <property type="project" value="UniProtKB-SubCell"/>
</dbReference>
<dbReference type="GO" id="GO:0042806">
    <property type="term" value="F:fucose binding"/>
    <property type="evidence" value="ECO:0007669"/>
    <property type="project" value="InterPro"/>
</dbReference>
<dbReference type="GO" id="GO:0036373">
    <property type="term" value="F:L-fucose mutarotase activity"/>
    <property type="evidence" value="ECO:0007669"/>
    <property type="project" value="UniProtKB-EC"/>
</dbReference>
<dbReference type="GO" id="GO:0036065">
    <property type="term" value="P:fucosylation"/>
    <property type="evidence" value="ECO:0007669"/>
    <property type="project" value="TreeGrafter"/>
</dbReference>
<dbReference type="GO" id="GO:0042354">
    <property type="term" value="P:L-fucose metabolic process"/>
    <property type="evidence" value="ECO:0007669"/>
    <property type="project" value="UniProtKB-UniRule"/>
</dbReference>
<dbReference type="Gene3D" id="3.40.1650.10">
    <property type="entry name" value="RbsD-like domain"/>
    <property type="match status" value="1"/>
</dbReference>
<dbReference type="HAMAP" id="MF_01662">
    <property type="entry name" value="L_fucose_rotase"/>
    <property type="match status" value="1"/>
</dbReference>
<dbReference type="InterPro" id="IPR023751">
    <property type="entry name" value="L-fucose_mutarotase"/>
</dbReference>
<dbReference type="InterPro" id="IPR023750">
    <property type="entry name" value="RbsD-like_sf"/>
</dbReference>
<dbReference type="InterPro" id="IPR050443">
    <property type="entry name" value="RbsD/FucU_mutarotase"/>
</dbReference>
<dbReference type="InterPro" id="IPR007721">
    <property type="entry name" value="RbsD_FucU"/>
</dbReference>
<dbReference type="NCBIfam" id="NF011949">
    <property type="entry name" value="PRK15420.1"/>
    <property type="match status" value="1"/>
</dbReference>
<dbReference type="PANTHER" id="PTHR31690">
    <property type="entry name" value="FUCOSE MUTAROTASE"/>
    <property type="match status" value="1"/>
</dbReference>
<dbReference type="PANTHER" id="PTHR31690:SF4">
    <property type="entry name" value="FUCOSE MUTAROTASE"/>
    <property type="match status" value="1"/>
</dbReference>
<dbReference type="Pfam" id="PF05025">
    <property type="entry name" value="RbsD_FucU"/>
    <property type="match status" value="1"/>
</dbReference>
<dbReference type="SUPFAM" id="SSF102546">
    <property type="entry name" value="RbsD-like"/>
    <property type="match status" value="1"/>
</dbReference>
<protein>
    <recommendedName>
        <fullName evidence="1">L-fucose mutarotase</fullName>
        <ecNumber evidence="1">5.1.3.29</ecNumber>
    </recommendedName>
    <alternativeName>
        <fullName evidence="1">Fucose 1-epimerase</fullName>
    </alternativeName>
    <alternativeName>
        <fullName evidence="1">Type-2 mutarotase</fullName>
    </alternativeName>
</protein>
<gene>
    <name evidence="1" type="primary">fucU</name>
    <name type="ordered locus">HAPS_1528</name>
</gene>
<organism>
    <name type="scientific">Glaesserella parasuis serovar 5 (strain SH0165)</name>
    <name type="common">Haemophilus parasuis</name>
    <dbReference type="NCBI Taxonomy" id="557723"/>
    <lineage>
        <taxon>Bacteria</taxon>
        <taxon>Pseudomonadati</taxon>
        <taxon>Pseudomonadota</taxon>
        <taxon>Gammaproteobacteria</taxon>
        <taxon>Pasteurellales</taxon>
        <taxon>Pasteurellaceae</taxon>
        <taxon>Glaesserella</taxon>
    </lineage>
</organism>
<accession>B8F6Y2</accession>
<proteinExistence type="inferred from homology"/>
<feature type="chain" id="PRO_1000187184" description="L-fucose mutarotase">
    <location>
        <begin position="1"/>
        <end position="146"/>
    </location>
</feature>
<feature type="active site" description="Proton donor" evidence="1">
    <location>
        <position position="22"/>
    </location>
</feature>
<feature type="binding site" evidence="1">
    <location>
        <position position="30"/>
    </location>
    <ligand>
        <name>substrate</name>
    </ligand>
</feature>
<feature type="binding site" evidence="1">
    <location>
        <position position="109"/>
    </location>
    <ligand>
        <name>substrate</name>
    </ligand>
</feature>
<feature type="binding site" evidence="1">
    <location>
        <begin position="131"/>
        <end position="133"/>
    </location>
    <ligand>
        <name>substrate</name>
    </ligand>
</feature>
<keyword id="KW-0119">Carbohydrate metabolism</keyword>
<keyword id="KW-0963">Cytoplasm</keyword>
<keyword id="KW-0294">Fucose metabolism</keyword>
<keyword id="KW-0413">Isomerase</keyword>
<keyword id="KW-1185">Reference proteome</keyword>